<name>ATP6_BRASO</name>
<gene>
    <name evidence="1" type="primary">atpB</name>
    <name type="ordered locus">BRADO6686</name>
</gene>
<keyword id="KW-0066">ATP synthesis</keyword>
<keyword id="KW-0997">Cell inner membrane</keyword>
<keyword id="KW-1003">Cell membrane</keyword>
<keyword id="KW-0138">CF(0)</keyword>
<keyword id="KW-0375">Hydrogen ion transport</keyword>
<keyword id="KW-0406">Ion transport</keyword>
<keyword id="KW-0472">Membrane</keyword>
<keyword id="KW-1185">Reference proteome</keyword>
<keyword id="KW-0812">Transmembrane</keyword>
<keyword id="KW-1133">Transmembrane helix</keyword>
<keyword id="KW-0813">Transport</keyword>
<reference key="1">
    <citation type="journal article" date="2007" name="Science">
        <title>Legumes symbioses: absence of nod genes in photosynthetic bradyrhizobia.</title>
        <authorList>
            <person name="Giraud E."/>
            <person name="Moulin L."/>
            <person name="Vallenet D."/>
            <person name="Barbe V."/>
            <person name="Cytryn E."/>
            <person name="Avarre J.-C."/>
            <person name="Jaubert M."/>
            <person name="Simon D."/>
            <person name="Cartieaux F."/>
            <person name="Prin Y."/>
            <person name="Bena G."/>
            <person name="Hannibal L."/>
            <person name="Fardoux J."/>
            <person name="Kojadinovic M."/>
            <person name="Vuillet L."/>
            <person name="Lajus A."/>
            <person name="Cruveiller S."/>
            <person name="Rouy Z."/>
            <person name="Mangenot S."/>
            <person name="Segurens B."/>
            <person name="Dossat C."/>
            <person name="Franck W.L."/>
            <person name="Chang W.-S."/>
            <person name="Saunders E."/>
            <person name="Bruce D."/>
            <person name="Richardson P."/>
            <person name="Normand P."/>
            <person name="Dreyfus B."/>
            <person name="Pignol D."/>
            <person name="Stacey G."/>
            <person name="Emerich D."/>
            <person name="Vermeglio A."/>
            <person name="Medigue C."/>
            <person name="Sadowsky M."/>
        </authorList>
    </citation>
    <scope>NUCLEOTIDE SEQUENCE [LARGE SCALE GENOMIC DNA]</scope>
    <source>
        <strain>ORS 278</strain>
    </source>
</reference>
<sequence length="247" mass="26933">MIDPIEQFHLNKIFTIGHIGNQEIAFTTSSAYMLLAVVLIAAMMLGAGRALVPGRFQSVVELAYEFVANTIRTSAGSHGMTFFPLVFSLFMFIFVSNIVGIIPYTFTVSSHIIVTFSLALLVFLTVIIYGFYKNGLKFFKLFVPSGIPAVILPLVVIIEIISFFSRPISHSVRLFANMLAGHVTLKVFASFVTMLGALGFVGKVGALLPLGLTVALTGLELMVAFLQAYVFTILTCIYLNDAIHPGH</sequence>
<organism>
    <name type="scientific">Bradyrhizobium sp. (strain ORS 278)</name>
    <dbReference type="NCBI Taxonomy" id="114615"/>
    <lineage>
        <taxon>Bacteria</taxon>
        <taxon>Pseudomonadati</taxon>
        <taxon>Pseudomonadota</taxon>
        <taxon>Alphaproteobacteria</taxon>
        <taxon>Hyphomicrobiales</taxon>
        <taxon>Nitrobacteraceae</taxon>
        <taxon>Bradyrhizobium</taxon>
    </lineage>
</organism>
<protein>
    <recommendedName>
        <fullName evidence="1">ATP synthase subunit a</fullName>
    </recommendedName>
    <alternativeName>
        <fullName evidence="1">ATP synthase F0 sector subunit a</fullName>
    </alternativeName>
    <alternativeName>
        <fullName evidence="1">F-ATPase subunit 6</fullName>
    </alternativeName>
</protein>
<proteinExistence type="inferred from homology"/>
<accession>A4Z2B4</accession>
<evidence type="ECO:0000255" key="1">
    <source>
        <dbReference type="HAMAP-Rule" id="MF_01393"/>
    </source>
</evidence>
<comment type="function">
    <text evidence="1">Key component of the proton channel; it plays a direct role in the translocation of protons across the membrane.</text>
</comment>
<comment type="subunit">
    <text evidence="1">F-type ATPases have 2 components, CF(1) - the catalytic core - and CF(0) - the membrane proton channel. CF(1) has five subunits: alpha(3), beta(3), gamma(1), delta(1), epsilon(1). CF(0) has four main subunits: a, b, b' and c.</text>
</comment>
<comment type="subcellular location">
    <subcellularLocation>
        <location evidence="1">Cell inner membrane</location>
        <topology evidence="1">Multi-pass membrane protein</topology>
    </subcellularLocation>
</comment>
<comment type="similarity">
    <text evidence="1">Belongs to the ATPase A chain family.</text>
</comment>
<feature type="chain" id="PRO_0000362251" description="ATP synthase subunit a">
    <location>
        <begin position="1"/>
        <end position="247"/>
    </location>
</feature>
<feature type="transmembrane region" description="Helical" evidence="1">
    <location>
        <begin position="24"/>
        <end position="44"/>
    </location>
</feature>
<feature type="transmembrane region" description="Helical" evidence="1">
    <location>
        <begin position="82"/>
        <end position="102"/>
    </location>
</feature>
<feature type="transmembrane region" description="Helical" evidence="1">
    <location>
        <begin position="112"/>
        <end position="132"/>
    </location>
</feature>
<feature type="transmembrane region" description="Helical" evidence="1">
    <location>
        <begin position="141"/>
        <end position="161"/>
    </location>
</feature>
<feature type="transmembrane region" description="Helical" evidence="1">
    <location>
        <begin position="181"/>
        <end position="201"/>
    </location>
</feature>
<feature type="transmembrane region" description="Helical" evidence="1">
    <location>
        <begin position="206"/>
        <end position="226"/>
    </location>
</feature>
<dbReference type="EMBL" id="CU234118">
    <property type="protein sequence ID" value="CAL80290.1"/>
    <property type="molecule type" value="Genomic_DNA"/>
</dbReference>
<dbReference type="RefSeq" id="WP_012030159.1">
    <property type="nucleotide sequence ID" value="NC_009445.1"/>
</dbReference>
<dbReference type="SMR" id="A4Z2B4"/>
<dbReference type="STRING" id="114615.BRADO6686"/>
<dbReference type="KEGG" id="bra:BRADO6686"/>
<dbReference type="eggNOG" id="COG0356">
    <property type="taxonomic scope" value="Bacteria"/>
</dbReference>
<dbReference type="HOGENOM" id="CLU_041018_0_2_5"/>
<dbReference type="OrthoDB" id="9809130at2"/>
<dbReference type="Proteomes" id="UP000001994">
    <property type="component" value="Chromosome"/>
</dbReference>
<dbReference type="GO" id="GO:0005886">
    <property type="term" value="C:plasma membrane"/>
    <property type="evidence" value="ECO:0007669"/>
    <property type="project" value="UniProtKB-SubCell"/>
</dbReference>
<dbReference type="GO" id="GO:0045259">
    <property type="term" value="C:proton-transporting ATP synthase complex"/>
    <property type="evidence" value="ECO:0007669"/>
    <property type="project" value="UniProtKB-KW"/>
</dbReference>
<dbReference type="GO" id="GO:0046933">
    <property type="term" value="F:proton-transporting ATP synthase activity, rotational mechanism"/>
    <property type="evidence" value="ECO:0007669"/>
    <property type="project" value="UniProtKB-UniRule"/>
</dbReference>
<dbReference type="CDD" id="cd00310">
    <property type="entry name" value="ATP-synt_Fo_a_6"/>
    <property type="match status" value="1"/>
</dbReference>
<dbReference type="FunFam" id="1.20.120.220:FF:000003">
    <property type="entry name" value="ATP synthase subunit a"/>
    <property type="match status" value="1"/>
</dbReference>
<dbReference type="Gene3D" id="1.20.120.220">
    <property type="entry name" value="ATP synthase, F0 complex, subunit A"/>
    <property type="match status" value="1"/>
</dbReference>
<dbReference type="HAMAP" id="MF_01393">
    <property type="entry name" value="ATP_synth_a_bact"/>
    <property type="match status" value="1"/>
</dbReference>
<dbReference type="InterPro" id="IPR000568">
    <property type="entry name" value="ATP_synth_F0_asu"/>
</dbReference>
<dbReference type="InterPro" id="IPR023011">
    <property type="entry name" value="ATP_synth_F0_asu_AS"/>
</dbReference>
<dbReference type="InterPro" id="IPR045083">
    <property type="entry name" value="ATP_synth_F0_asu_bact/mt"/>
</dbReference>
<dbReference type="InterPro" id="IPR035908">
    <property type="entry name" value="F0_ATP_A_sf"/>
</dbReference>
<dbReference type="NCBIfam" id="TIGR01131">
    <property type="entry name" value="ATP_synt_6_or_A"/>
    <property type="match status" value="1"/>
</dbReference>
<dbReference type="NCBIfam" id="NF004482">
    <property type="entry name" value="PRK05815.2-4"/>
    <property type="match status" value="1"/>
</dbReference>
<dbReference type="PANTHER" id="PTHR11410">
    <property type="entry name" value="ATP SYNTHASE SUBUNIT A"/>
    <property type="match status" value="1"/>
</dbReference>
<dbReference type="PANTHER" id="PTHR11410:SF0">
    <property type="entry name" value="ATP SYNTHASE SUBUNIT A"/>
    <property type="match status" value="1"/>
</dbReference>
<dbReference type="Pfam" id="PF00119">
    <property type="entry name" value="ATP-synt_A"/>
    <property type="match status" value="1"/>
</dbReference>
<dbReference type="PRINTS" id="PR00123">
    <property type="entry name" value="ATPASEA"/>
</dbReference>
<dbReference type="SUPFAM" id="SSF81336">
    <property type="entry name" value="F1F0 ATP synthase subunit A"/>
    <property type="match status" value="1"/>
</dbReference>
<dbReference type="PROSITE" id="PS00449">
    <property type="entry name" value="ATPASE_A"/>
    <property type="match status" value="1"/>
</dbReference>